<dbReference type="EMBL" id="AK012215">
    <property type="protein sequence ID" value="BAB28102.1"/>
    <property type="molecule type" value="mRNA"/>
</dbReference>
<dbReference type="EMBL" id="AK076781">
    <property type="protein sequence ID" value="BAC36478.1"/>
    <property type="molecule type" value="mRNA"/>
</dbReference>
<dbReference type="EMBL" id="AK134965">
    <property type="protein sequence ID" value="BAE22360.1"/>
    <property type="molecule type" value="mRNA"/>
</dbReference>
<dbReference type="EMBL" id="BC054106">
    <property type="protein sequence ID" value="AAH54106.1"/>
    <property type="molecule type" value="mRNA"/>
</dbReference>
<dbReference type="CCDS" id="CCDS16503.1">
    <molecule id="Q8BIX3-1"/>
</dbReference>
<dbReference type="RefSeq" id="NP_001020273.1">
    <molecule id="Q8BIX3-1"/>
    <property type="nucleotide sequence ID" value="NM_001025102.2"/>
</dbReference>
<dbReference type="RefSeq" id="NP_001349793.1">
    <molecule id="Q8BIX3-1"/>
    <property type="nucleotide sequence ID" value="NM_001362864.1"/>
</dbReference>
<dbReference type="RefSeq" id="NP_001349794.1">
    <molecule id="Q8BIX3-1"/>
    <property type="nucleotide sequence ID" value="NM_001362865.1"/>
</dbReference>
<dbReference type="RefSeq" id="NP_776111.1">
    <molecule id="Q8BIX3-1"/>
    <property type="nucleotide sequence ID" value="NM_173750.2"/>
</dbReference>
<dbReference type="RefSeq" id="XP_006499149.1">
    <property type="nucleotide sequence ID" value="XM_006499086.3"/>
</dbReference>
<dbReference type="SMR" id="Q8BIX3"/>
<dbReference type="BioGRID" id="229358">
    <property type="interactions" value="1"/>
</dbReference>
<dbReference type="FunCoup" id="Q8BIX3">
    <property type="interactions" value="2632"/>
</dbReference>
<dbReference type="IntAct" id="Q8BIX3">
    <property type="interactions" value="1"/>
</dbReference>
<dbReference type="STRING" id="10090.ENSMUSP00000028536"/>
<dbReference type="iPTMnet" id="Q8BIX3"/>
<dbReference type="PhosphoSitePlus" id="Q8BIX3"/>
<dbReference type="SwissPalm" id="Q8BIX3"/>
<dbReference type="jPOST" id="Q8BIX3"/>
<dbReference type="PaxDb" id="10090-ENSMUSP00000028536"/>
<dbReference type="PeptideAtlas" id="Q8BIX3"/>
<dbReference type="ProteomicsDB" id="285803">
    <molecule id="Q8BIX3-1"/>
</dbReference>
<dbReference type="ProteomicsDB" id="285804">
    <molecule id="Q8BIX3-2"/>
</dbReference>
<dbReference type="Pumba" id="Q8BIX3"/>
<dbReference type="Antibodypedia" id="53638">
    <property type="antibodies" value="112 antibodies from 18 providers"/>
</dbReference>
<dbReference type="DNASU" id="212772"/>
<dbReference type="Ensembl" id="ENSMUST00000028536.13">
    <molecule id="Q8BIX3-1"/>
    <property type="protein sequence ID" value="ENSMUSP00000028536.7"/>
    <property type="gene ID" value="ENSMUSG00000027122.16"/>
</dbReference>
<dbReference type="Ensembl" id="ENSMUST00000093883.4">
    <molecule id="Q8BIX3-1"/>
    <property type="protein sequence ID" value="ENSMUSP00000091409.4"/>
    <property type="gene ID" value="ENSMUSG00000027122.16"/>
</dbReference>
<dbReference type="GeneID" id="212772"/>
<dbReference type="KEGG" id="mmu:212772"/>
<dbReference type="UCSC" id="uc008llq.1">
    <molecule id="Q8BIX3-1"/>
    <property type="organism name" value="mouse"/>
</dbReference>
<dbReference type="UCSC" id="uc008lls.1">
    <molecule id="Q8BIX3-2"/>
    <property type="organism name" value="mouse"/>
</dbReference>
<dbReference type="AGR" id="MGI:1926020"/>
<dbReference type="CTD" id="120534"/>
<dbReference type="MGI" id="MGI:1926020">
    <property type="gene designation" value="Arl14ep"/>
</dbReference>
<dbReference type="VEuPathDB" id="HostDB:ENSMUSG00000027122"/>
<dbReference type="eggNOG" id="KOG4850">
    <property type="taxonomic scope" value="Eukaryota"/>
</dbReference>
<dbReference type="GeneTree" id="ENSGT00940000156586"/>
<dbReference type="HOGENOM" id="CLU_093502_0_0_1"/>
<dbReference type="InParanoid" id="Q8BIX3"/>
<dbReference type="OMA" id="ECHKIYY"/>
<dbReference type="OrthoDB" id="5984406at2759"/>
<dbReference type="PhylomeDB" id="Q8BIX3"/>
<dbReference type="TreeFam" id="TF333216"/>
<dbReference type="BioGRID-ORCS" id="212772">
    <property type="hits" value="7 hits in 61 CRISPR screens"/>
</dbReference>
<dbReference type="ChiTaRS" id="Arl14ep">
    <property type="organism name" value="mouse"/>
</dbReference>
<dbReference type="PRO" id="PR:Q8BIX3"/>
<dbReference type="Proteomes" id="UP000000589">
    <property type="component" value="Chromosome 2"/>
</dbReference>
<dbReference type="RNAct" id="Q8BIX3">
    <property type="molecule type" value="protein"/>
</dbReference>
<dbReference type="Bgee" id="ENSMUSG00000027122">
    <property type="expression patterns" value="Expressed in embryonic post-anal tail and 263 other cell types or tissues"/>
</dbReference>
<dbReference type="GO" id="GO:0005829">
    <property type="term" value="C:cytosol"/>
    <property type="evidence" value="ECO:0007669"/>
    <property type="project" value="Ensembl"/>
</dbReference>
<dbReference type="GO" id="GO:0005925">
    <property type="term" value="C:focal adhesion"/>
    <property type="evidence" value="ECO:0007669"/>
    <property type="project" value="Ensembl"/>
</dbReference>
<dbReference type="GO" id="GO:0005730">
    <property type="term" value="C:nucleolus"/>
    <property type="evidence" value="ECO:0007669"/>
    <property type="project" value="Ensembl"/>
</dbReference>
<dbReference type="GO" id="GO:0005654">
    <property type="term" value="C:nucleoplasm"/>
    <property type="evidence" value="ECO:0007669"/>
    <property type="project" value="Ensembl"/>
</dbReference>
<dbReference type="GO" id="GO:0005886">
    <property type="term" value="C:plasma membrane"/>
    <property type="evidence" value="ECO:0007669"/>
    <property type="project" value="Ensembl"/>
</dbReference>
<dbReference type="InterPro" id="IPR029264">
    <property type="entry name" value="ARF7EP_C"/>
</dbReference>
<dbReference type="PANTHER" id="PTHR46536">
    <property type="entry name" value="ARL14 EFFECTOR PROTEIN"/>
    <property type="match status" value="1"/>
</dbReference>
<dbReference type="PANTHER" id="PTHR46536:SF1">
    <property type="entry name" value="ARL14 EFFECTOR PROTEIN"/>
    <property type="match status" value="1"/>
</dbReference>
<dbReference type="Pfam" id="PF14949">
    <property type="entry name" value="ARF7EP_C"/>
    <property type="match status" value="1"/>
</dbReference>
<organism>
    <name type="scientific">Mus musculus</name>
    <name type="common">Mouse</name>
    <dbReference type="NCBI Taxonomy" id="10090"/>
    <lineage>
        <taxon>Eukaryota</taxon>
        <taxon>Metazoa</taxon>
        <taxon>Chordata</taxon>
        <taxon>Craniata</taxon>
        <taxon>Vertebrata</taxon>
        <taxon>Euteleostomi</taxon>
        <taxon>Mammalia</taxon>
        <taxon>Eutheria</taxon>
        <taxon>Euarchontoglires</taxon>
        <taxon>Glires</taxon>
        <taxon>Rodentia</taxon>
        <taxon>Myomorpha</taxon>
        <taxon>Muroidea</taxon>
        <taxon>Muridae</taxon>
        <taxon>Murinae</taxon>
        <taxon>Mus</taxon>
        <taxon>Mus</taxon>
    </lineage>
</organism>
<keyword id="KW-0025">Alternative splicing</keyword>
<keyword id="KW-0963">Cytoplasm</keyword>
<keyword id="KW-1017">Isopeptide bond</keyword>
<keyword id="KW-0597">Phosphoprotein</keyword>
<keyword id="KW-1185">Reference proteome</keyword>
<keyword id="KW-0832">Ubl conjugation</keyword>
<evidence type="ECO:0000250" key="1"/>
<evidence type="ECO:0000250" key="2">
    <source>
        <dbReference type="UniProtKB" id="Q8N8R7"/>
    </source>
</evidence>
<evidence type="ECO:0000256" key="3">
    <source>
        <dbReference type="SAM" id="MobiDB-lite"/>
    </source>
</evidence>
<evidence type="ECO:0000303" key="4">
    <source>
    </source>
</evidence>
<evidence type="ECO:0000305" key="5"/>
<evidence type="ECO:0007744" key="6">
    <source>
    </source>
</evidence>
<accession>Q8BIX3</accession>
<accession>Q7TPE6</accession>
<accession>Q9CZS0</accession>
<gene>
    <name type="primary">Arl14ep</name>
    <name type="synonym">Arf7ep</name>
</gene>
<proteinExistence type="evidence at protein level"/>
<sequence length="276" mass="31011">MDPCSVGVQLRTTHDCHKTFYTRHTGFKTLKELSSNDMLLLQLRTGMTLSGNNTICLHHVKIYIDRFEDLQKSCCDPFNIHKKLAKKNLHVIDLDDATFLSAKFGRQLVPGWKLCPKCTQIINGSVDVDSDDRQRRKPDSDGRTAKALRSLQFTNPGKQTEFAPEGGKREKRKLTKATSAASDRQIIPAKSKVYDSQGLLIFSGMDLCDCLDEDCLGCFYACPTCGSTKCGAECRCDRKWLYEQIEIEGGEIIHNKHAGKAYGLLSPCHPYDILQK</sequence>
<reference key="1">
    <citation type="journal article" date="2005" name="Science">
        <title>The transcriptional landscape of the mammalian genome.</title>
        <authorList>
            <person name="Carninci P."/>
            <person name="Kasukawa T."/>
            <person name="Katayama S."/>
            <person name="Gough J."/>
            <person name="Frith M.C."/>
            <person name="Maeda N."/>
            <person name="Oyama R."/>
            <person name="Ravasi T."/>
            <person name="Lenhard B."/>
            <person name="Wells C."/>
            <person name="Kodzius R."/>
            <person name="Shimokawa K."/>
            <person name="Bajic V.B."/>
            <person name="Brenner S.E."/>
            <person name="Batalov S."/>
            <person name="Forrest A.R."/>
            <person name="Zavolan M."/>
            <person name="Davis M.J."/>
            <person name="Wilming L.G."/>
            <person name="Aidinis V."/>
            <person name="Allen J.E."/>
            <person name="Ambesi-Impiombato A."/>
            <person name="Apweiler R."/>
            <person name="Aturaliya R.N."/>
            <person name="Bailey T.L."/>
            <person name="Bansal M."/>
            <person name="Baxter L."/>
            <person name="Beisel K.W."/>
            <person name="Bersano T."/>
            <person name="Bono H."/>
            <person name="Chalk A.M."/>
            <person name="Chiu K.P."/>
            <person name="Choudhary V."/>
            <person name="Christoffels A."/>
            <person name="Clutterbuck D.R."/>
            <person name="Crowe M.L."/>
            <person name="Dalla E."/>
            <person name="Dalrymple B.P."/>
            <person name="de Bono B."/>
            <person name="Della Gatta G."/>
            <person name="di Bernardo D."/>
            <person name="Down T."/>
            <person name="Engstrom P."/>
            <person name="Fagiolini M."/>
            <person name="Faulkner G."/>
            <person name="Fletcher C.F."/>
            <person name="Fukushima T."/>
            <person name="Furuno M."/>
            <person name="Futaki S."/>
            <person name="Gariboldi M."/>
            <person name="Georgii-Hemming P."/>
            <person name="Gingeras T.R."/>
            <person name="Gojobori T."/>
            <person name="Green R.E."/>
            <person name="Gustincich S."/>
            <person name="Harbers M."/>
            <person name="Hayashi Y."/>
            <person name="Hensch T.K."/>
            <person name="Hirokawa N."/>
            <person name="Hill D."/>
            <person name="Huminiecki L."/>
            <person name="Iacono M."/>
            <person name="Ikeo K."/>
            <person name="Iwama A."/>
            <person name="Ishikawa T."/>
            <person name="Jakt M."/>
            <person name="Kanapin A."/>
            <person name="Katoh M."/>
            <person name="Kawasawa Y."/>
            <person name="Kelso J."/>
            <person name="Kitamura H."/>
            <person name="Kitano H."/>
            <person name="Kollias G."/>
            <person name="Krishnan S.P."/>
            <person name="Kruger A."/>
            <person name="Kummerfeld S.K."/>
            <person name="Kurochkin I.V."/>
            <person name="Lareau L.F."/>
            <person name="Lazarevic D."/>
            <person name="Lipovich L."/>
            <person name="Liu J."/>
            <person name="Liuni S."/>
            <person name="McWilliam S."/>
            <person name="Madan Babu M."/>
            <person name="Madera M."/>
            <person name="Marchionni L."/>
            <person name="Matsuda H."/>
            <person name="Matsuzawa S."/>
            <person name="Miki H."/>
            <person name="Mignone F."/>
            <person name="Miyake S."/>
            <person name="Morris K."/>
            <person name="Mottagui-Tabar S."/>
            <person name="Mulder N."/>
            <person name="Nakano N."/>
            <person name="Nakauchi H."/>
            <person name="Ng P."/>
            <person name="Nilsson R."/>
            <person name="Nishiguchi S."/>
            <person name="Nishikawa S."/>
            <person name="Nori F."/>
            <person name="Ohara O."/>
            <person name="Okazaki Y."/>
            <person name="Orlando V."/>
            <person name="Pang K.C."/>
            <person name="Pavan W.J."/>
            <person name="Pavesi G."/>
            <person name="Pesole G."/>
            <person name="Petrovsky N."/>
            <person name="Piazza S."/>
            <person name="Reed J."/>
            <person name="Reid J.F."/>
            <person name="Ring B.Z."/>
            <person name="Ringwald M."/>
            <person name="Rost B."/>
            <person name="Ruan Y."/>
            <person name="Salzberg S.L."/>
            <person name="Sandelin A."/>
            <person name="Schneider C."/>
            <person name="Schoenbach C."/>
            <person name="Sekiguchi K."/>
            <person name="Semple C.A."/>
            <person name="Seno S."/>
            <person name="Sessa L."/>
            <person name="Sheng Y."/>
            <person name="Shibata Y."/>
            <person name="Shimada H."/>
            <person name="Shimada K."/>
            <person name="Silva D."/>
            <person name="Sinclair B."/>
            <person name="Sperling S."/>
            <person name="Stupka E."/>
            <person name="Sugiura K."/>
            <person name="Sultana R."/>
            <person name="Takenaka Y."/>
            <person name="Taki K."/>
            <person name="Tammoja K."/>
            <person name="Tan S.L."/>
            <person name="Tang S."/>
            <person name="Taylor M.S."/>
            <person name="Tegner J."/>
            <person name="Teichmann S.A."/>
            <person name="Ueda H.R."/>
            <person name="van Nimwegen E."/>
            <person name="Verardo R."/>
            <person name="Wei C.L."/>
            <person name="Yagi K."/>
            <person name="Yamanishi H."/>
            <person name="Zabarovsky E."/>
            <person name="Zhu S."/>
            <person name="Zimmer A."/>
            <person name="Hide W."/>
            <person name="Bult C."/>
            <person name="Grimmond S.M."/>
            <person name="Teasdale R.D."/>
            <person name="Liu E.T."/>
            <person name="Brusic V."/>
            <person name="Quackenbush J."/>
            <person name="Wahlestedt C."/>
            <person name="Mattick J.S."/>
            <person name="Hume D.A."/>
            <person name="Kai C."/>
            <person name="Sasaki D."/>
            <person name="Tomaru Y."/>
            <person name="Fukuda S."/>
            <person name="Kanamori-Katayama M."/>
            <person name="Suzuki M."/>
            <person name="Aoki J."/>
            <person name="Arakawa T."/>
            <person name="Iida J."/>
            <person name="Imamura K."/>
            <person name="Itoh M."/>
            <person name="Kato T."/>
            <person name="Kawaji H."/>
            <person name="Kawagashira N."/>
            <person name="Kawashima T."/>
            <person name="Kojima M."/>
            <person name="Kondo S."/>
            <person name="Konno H."/>
            <person name="Nakano K."/>
            <person name="Ninomiya N."/>
            <person name="Nishio T."/>
            <person name="Okada M."/>
            <person name="Plessy C."/>
            <person name="Shibata K."/>
            <person name="Shiraki T."/>
            <person name="Suzuki S."/>
            <person name="Tagami M."/>
            <person name="Waki K."/>
            <person name="Watahiki A."/>
            <person name="Okamura-Oho Y."/>
            <person name="Suzuki H."/>
            <person name="Kawai J."/>
            <person name="Hayashizaki Y."/>
        </authorList>
    </citation>
    <scope>NUCLEOTIDE SEQUENCE [LARGE SCALE MRNA] (ISOFORMS 1 AND 2)</scope>
    <source>
        <strain>C57BL/6J</strain>
        <tissue>Embryo</tissue>
        <tissue>Olfactory bulb</tissue>
        <tissue>Testis</tissue>
    </source>
</reference>
<reference key="2">
    <citation type="journal article" date="2004" name="Genome Res.">
        <title>The status, quality, and expansion of the NIH full-length cDNA project: the Mammalian Gene Collection (MGC).</title>
        <authorList>
            <consortium name="The MGC Project Team"/>
        </authorList>
    </citation>
    <scope>NUCLEOTIDE SEQUENCE [LARGE SCALE MRNA] (ISOFORM 1)</scope>
    <source>
        <strain>ICR</strain>
        <tissue>Trophoblast stem cell</tissue>
    </source>
</reference>
<reference key="3">
    <citation type="journal article" date="2007" name="Proc. Natl. Acad. Sci. U.S.A.">
        <title>Large-scale phosphorylation analysis of mouse liver.</title>
        <authorList>
            <person name="Villen J."/>
            <person name="Beausoleil S.A."/>
            <person name="Gerber S.A."/>
            <person name="Gygi S.P."/>
        </authorList>
    </citation>
    <scope>PHOSPHORYLATION [LARGE SCALE ANALYSIS] AT SER-266</scope>
    <scope>IDENTIFICATION BY MASS SPECTROMETRY [LARGE SCALE ANALYSIS]</scope>
    <source>
        <tissue>Liver</tissue>
    </source>
</reference>
<name>AL14E_MOUSE</name>
<protein>
    <recommendedName>
        <fullName>ARL14 effector protein</fullName>
    </recommendedName>
    <alternativeName>
        <fullName>ARF7 effector protein</fullName>
    </alternativeName>
</protein>
<feature type="chain" id="PRO_0000251893" description="ARL14 effector protein">
    <location>
        <begin position="1"/>
        <end position="276"/>
    </location>
</feature>
<feature type="region of interest" description="Disordered" evidence="3">
    <location>
        <begin position="158"/>
        <end position="177"/>
    </location>
</feature>
<feature type="modified residue" description="Phosphoserine" evidence="2">
    <location>
        <position position="182"/>
    </location>
</feature>
<feature type="modified residue" description="Phosphoserine" evidence="6">
    <location>
        <position position="266"/>
    </location>
</feature>
<feature type="cross-link" description="Glycyl lysine isopeptide (Lys-Gly) (interchain with G-Cter in SUMO2)" evidence="2">
    <location>
        <position position="176"/>
    </location>
</feature>
<feature type="splice variant" id="VSP_020776" description="In isoform 2." evidence="4">
    <original>GRTAKALRSLQFTNPGKQ</original>
    <variation>VCIEAIVLSTVWDFRYME</variation>
    <location>
        <begin position="142"/>
        <end position="159"/>
    </location>
</feature>
<feature type="splice variant" id="VSP_020777" description="In isoform 2." evidence="4">
    <location>
        <begin position="160"/>
        <end position="276"/>
    </location>
</feature>
<feature type="sequence conflict" description="In Ref. 2; AAH54106." evidence="5" ref="2">
    <original>Q</original>
    <variation>R</variation>
    <location>
        <position position="71"/>
    </location>
</feature>
<feature type="sequence conflict" description="In Ref. 1; BAB28102." evidence="5" ref="1">
    <original>K</original>
    <variation>R</variation>
    <location>
        <position position="86"/>
    </location>
</feature>
<comment type="function">
    <text evidence="1">Through its interaction with ARL14 and MYO1E, may connect MHC class II-containing cytoplasmic vesicles to the actin network and hence controls the movement of these vesicles along the actin cytoskeleton in dendritic cells.</text>
</comment>
<comment type="subunit">
    <text evidence="1">Interacts with ARL14 and MYO1E.</text>
</comment>
<comment type="subcellular location">
    <subcellularLocation>
        <location evidence="1">Cytoplasm</location>
    </subcellularLocation>
</comment>
<comment type="alternative products">
    <event type="alternative splicing"/>
    <isoform>
        <id>Q8BIX3-1</id>
        <name>1</name>
        <sequence type="displayed"/>
    </isoform>
    <isoform>
        <id>Q8BIX3-2</id>
        <name>2</name>
        <sequence type="described" ref="VSP_020776 VSP_020777"/>
    </isoform>
</comment>
<comment type="miscellaneous">
    <molecule>Isoform 2</molecule>
    <text evidence="5">May be due to intron retention.</text>
</comment>